<dbReference type="EMBL" id="CP000776">
    <property type="protein sequence ID" value="ABS51621.1"/>
    <property type="molecule type" value="Genomic_DNA"/>
</dbReference>
<dbReference type="RefSeq" id="WP_012108117.1">
    <property type="nucleotide sequence ID" value="NC_009714.1"/>
</dbReference>
<dbReference type="SMR" id="A7HZZ5"/>
<dbReference type="STRING" id="360107.CHAB381_0230"/>
<dbReference type="KEGG" id="cha:CHAB381_0230"/>
<dbReference type="eggNOG" id="COG0236">
    <property type="taxonomic scope" value="Bacteria"/>
</dbReference>
<dbReference type="HOGENOM" id="CLU_108696_5_1_7"/>
<dbReference type="OrthoDB" id="9804551at2"/>
<dbReference type="UniPathway" id="UPA00094"/>
<dbReference type="Proteomes" id="UP000002407">
    <property type="component" value="Chromosome"/>
</dbReference>
<dbReference type="GO" id="GO:0005829">
    <property type="term" value="C:cytosol"/>
    <property type="evidence" value="ECO:0007669"/>
    <property type="project" value="TreeGrafter"/>
</dbReference>
<dbReference type="GO" id="GO:0016020">
    <property type="term" value="C:membrane"/>
    <property type="evidence" value="ECO:0007669"/>
    <property type="project" value="GOC"/>
</dbReference>
<dbReference type="GO" id="GO:0000035">
    <property type="term" value="F:acyl binding"/>
    <property type="evidence" value="ECO:0007669"/>
    <property type="project" value="TreeGrafter"/>
</dbReference>
<dbReference type="GO" id="GO:0000036">
    <property type="term" value="F:acyl carrier activity"/>
    <property type="evidence" value="ECO:0007669"/>
    <property type="project" value="UniProtKB-UniRule"/>
</dbReference>
<dbReference type="GO" id="GO:0031177">
    <property type="term" value="F:phosphopantetheine binding"/>
    <property type="evidence" value="ECO:0007669"/>
    <property type="project" value="InterPro"/>
</dbReference>
<dbReference type="GO" id="GO:0009245">
    <property type="term" value="P:lipid A biosynthetic process"/>
    <property type="evidence" value="ECO:0007669"/>
    <property type="project" value="TreeGrafter"/>
</dbReference>
<dbReference type="Gene3D" id="1.10.1200.10">
    <property type="entry name" value="ACP-like"/>
    <property type="match status" value="1"/>
</dbReference>
<dbReference type="HAMAP" id="MF_01217">
    <property type="entry name" value="Acyl_carrier"/>
    <property type="match status" value="1"/>
</dbReference>
<dbReference type="InterPro" id="IPR003231">
    <property type="entry name" value="ACP"/>
</dbReference>
<dbReference type="InterPro" id="IPR036736">
    <property type="entry name" value="ACP-like_sf"/>
</dbReference>
<dbReference type="InterPro" id="IPR020806">
    <property type="entry name" value="PKS_PP-bd"/>
</dbReference>
<dbReference type="InterPro" id="IPR009081">
    <property type="entry name" value="PP-bd_ACP"/>
</dbReference>
<dbReference type="InterPro" id="IPR006162">
    <property type="entry name" value="Ppantetheine_attach_site"/>
</dbReference>
<dbReference type="NCBIfam" id="TIGR00517">
    <property type="entry name" value="acyl_carrier"/>
    <property type="match status" value="1"/>
</dbReference>
<dbReference type="NCBIfam" id="NF002148">
    <property type="entry name" value="PRK00982.1-2"/>
    <property type="match status" value="1"/>
</dbReference>
<dbReference type="NCBIfam" id="NF002150">
    <property type="entry name" value="PRK00982.1-4"/>
    <property type="match status" value="1"/>
</dbReference>
<dbReference type="PANTHER" id="PTHR20863">
    <property type="entry name" value="ACYL CARRIER PROTEIN"/>
    <property type="match status" value="1"/>
</dbReference>
<dbReference type="PANTHER" id="PTHR20863:SF76">
    <property type="entry name" value="CARRIER DOMAIN-CONTAINING PROTEIN"/>
    <property type="match status" value="1"/>
</dbReference>
<dbReference type="Pfam" id="PF00550">
    <property type="entry name" value="PP-binding"/>
    <property type="match status" value="1"/>
</dbReference>
<dbReference type="SMART" id="SM00823">
    <property type="entry name" value="PKS_PP"/>
    <property type="match status" value="1"/>
</dbReference>
<dbReference type="SUPFAM" id="SSF47336">
    <property type="entry name" value="ACP-like"/>
    <property type="match status" value="1"/>
</dbReference>
<dbReference type="PROSITE" id="PS50075">
    <property type="entry name" value="CARRIER"/>
    <property type="match status" value="1"/>
</dbReference>
<dbReference type="PROSITE" id="PS00012">
    <property type="entry name" value="PHOSPHOPANTETHEINE"/>
    <property type="match status" value="1"/>
</dbReference>
<evidence type="ECO:0000255" key="1">
    <source>
        <dbReference type="HAMAP-Rule" id="MF_01217"/>
    </source>
</evidence>
<evidence type="ECO:0000255" key="2">
    <source>
        <dbReference type="PROSITE-ProRule" id="PRU00258"/>
    </source>
</evidence>
<sequence>MEVFEEVRDVVVEQLSVAPDAVKIDSKIIEDLGADSLDVVELVMALEEKFGIEIPDSEAEKLISIKDVVTYIENLNKNK</sequence>
<gene>
    <name evidence="1" type="primary">acpP</name>
    <name type="ordered locus">CHAB381_0230</name>
</gene>
<organism>
    <name type="scientific">Campylobacter hominis (strain ATCC BAA-381 / DSM 21671 / CCUG 45161 / LMG 19568 / NCTC 13146 / CH001A)</name>
    <dbReference type="NCBI Taxonomy" id="360107"/>
    <lineage>
        <taxon>Bacteria</taxon>
        <taxon>Pseudomonadati</taxon>
        <taxon>Campylobacterota</taxon>
        <taxon>Epsilonproteobacteria</taxon>
        <taxon>Campylobacterales</taxon>
        <taxon>Campylobacteraceae</taxon>
        <taxon>Campylobacter</taxon>
    </lineage>
</organism>
<feature type="chain" id="PRO_1000066581" description="Acyl carrier protein">
    <location>
        <begin position="1"/>
        <end position="79"/>
    </location>
</feature>
<feature type="domain" description="Carrier" evidence="2">
    <location>
        <begin position="1"/>
        <end position="76"/>
    </location>
</feature>
<feature type="modified residue" description="O-(pantetheine 4'-phosphoryl)serine" evidence="2">
    <location>
        <position position="36"/>
    </location>
</feature>
<accession>A7HZZ5</accession>
<keyword id="KW-0963">Cytoplasm</keyword>
<keyword id="KW-0275">Fatty acid biosynthesis</keyword>
<keyword id="KW-0276">Fatty acid metabolism</keyword>
<keyword id="KW-0444">Lipid biosynthesis</keyword>
<keyword id="KW-0443">Lipid metabolism</keyword>
<keyword id="KW-0596">Phosphopantetheine</keyword>
<keyword id="KW-0597">Phosphoprotein</keyword>
<keyword id="KW-1185">Reference proteome</keyword>
<protein>
    <recommendedName>
        <fullName evidence="1">Acyl carrier protein</fullName>
        <shortName evidence="1">ACP</shortName>
    </recommendedName>
</protein>
<proteinExistence type="inferred from homology"/>
<name>ACP_CAMHC</name>
<comment type="function">
    <text evidence="1">Carrier of the growing fatty acid chain in fatty acid biosynthesis.</text>
</comment>
<comment type="pathway">
    <text evidence="1">Lipid metabolism; fatty acid biosynthesis.</text>
</comment>
<comment type="subcellular location">
    <subcellularLocation>
        <location evidence="1">Cytoplasm</location>
    </subcellularLocation>
</comment>
<comment type="PTM">
    <text evidence="1">4'-phosphopantetheine is transferred from CoA to a specific serine of apo-ACP by AcpS. This modification is essential for activity because fatty acids are bound in thioester linkage to the sulfhydryl of the prosthetic group.</text>
</comment>
<comment type="similarity">
    <text evidence="1">Belongs to the acyl carrier protein (ACP) family.</text>
</comment>
<reference key="1">
    <citation type="submission" date="2007-07" db="EMBL/GenBank/DDBJ databases">
        <title>Complete genome sequence of Campylobacter hominis ATCC BAA-381, a commensal isolated from the human gastrointestinal tract.</title>
        <authorList>
            <person name="Fouts D.E."/>
            <person name="Mongodin E.F."/>
            <person name="Puiu D."/>
            <person name="Sebastian Y."/>
            <person name="Miller W.G."/>
            <person name="Mandrell R.E."/>
            <person name="Nelson K.E."/>
        </authorList>
    </citation>
    <scope>NUCLEOTIDE SEQUENCE [LARGE SCALE GENOMIC DNA]</scope>
    <source>
        <strain>ATCC BAA-381 / DSM 21671 / CCUG 45161 / LMG 19568 / NCTC 13146 / CH001A</strain>
    </source>
</reference>